<evidence type="ECO:0000250" key="1"/>
<evidence type="ECO:0000305" key="2"/>
<proteinExistence type="inferred from homology"/>
<reference key="1">
    <citation type="journal article" date="2002" name="Proc. Natl. Acad. Sci. U.S.A.">
        <title>Extensive mosaic structure revealed by the complete genome sequence of uropathogenic Escherichia coli.</title>
        <authorList>
            <person name="Welch R.A."/>
            <person name="Burland V."/>
            <person name="Plunkett G. III"/>
            <person name="Redford P."/>
            <person name="Roesch P."/>
            <person name="Rasko D."/>
            <person name="Buckles E.L."/>
            <person name="Liou S.-R."/>
            <person name="Boutin A."/>
            <person name="Hackett J."/>
            <person name="Stroud D."/>
            <person name="Mayhew G.F."/>
            <person name="Rose D.J."/>
            <person name="Zhou S."/>
            <person name="Schwartz D.C."/>
            <person name="Perna N.T."/>
            <person name="Mobley H.L.T."/>
            <person name="Donnenberg M.S."/>
            <person name="Blattner F.R."/>
        </authorList>
    </citation>
    <scope>NUCLEOTIDE SEQUENCE [LARGE SCALE GENOMIC DNA]</scope>
    <source>
        <strain>CFT073 / ATCC 700928 / UPEC</strain>
    </source>
</reference>
<comment type="function">
    <text evidence="1">Involved in a glutamine-transport system GlnHPQ.</text>
</comment>
<comment type="subcellular location">
    <subcellularLocation>
        <location evidence="1">Periplasm</location>
    </subcellularLocation>
</comment>
<comment type="induction">
    <text evidence="1">By lack of glutamine.</text>
</comment>
<comment type="similarity">
    <text evidence="2">Belongs to the bacterial solute-binding protein 3 family.</text>
</comment>
<gene>
    <name type="primary">glnH</name>
    <name type="ordered locus">c0896</name>
</gene>
<dbReference type="EMBL" id="AE014075">
    <property type="protein sequence ID" value="AAN79369.1"/>
    <property type="molecule type" value="Genomic_DNA"/>
</dbReference>
<dbReference type="RefSeq" id="WP_000843866.1">
    <property type="nucleotide sequence ID" value="NZ_CP051263.1"/>
</dbReference>
<dbReference type="BMRB" id="P0AEQ4"/>
<dbReference type="SMR" id="P0AEQ4"/>
<dbReference type="STRING" id="199310.c0896"/>
<dbReference type="GeneID" id="93776617"/>
<dbReference type="KEGG" id="ecc:c0896"/>
<dbReference type="eggNOG" id="COG0834">
    <property type="taxonomic scope" value="Bacteria"/>
</dbReference>
<dbReference type="HOGENOM" id="CLU_019602_18_2_6"/>
<dbReference type="BioCyc" id="ECOL199310:C0896-MONOMER"/>
<dbReference type="Proteomes" id="UP000001410">
    <property type="component" value="Chromosome"/>
</dbReference>
<dbReference type="GO" id="GO:0016020">
    <property type="term" value="C:membrane"/>
    <property type="evidence" value="ECO:0007669"/>
    <property type="project" value="InterPro"/>
</dbReference>
<dbReference type="GO" id="GO:0030288">
    <property type="term" value="C:outer membrane-bounded periplasmic space"/>
    <property type="evidence" value="ECO:0007669"/>
    <property type="project" value="UniProtKB-ARBA"/>
</dbReference>
<dbReference type="GO" id="GO:0015276">
    <property type="term" value="F:ligand-gated monoatomic ion channel activity"/>
    <property type="evidence" value="ECO:0007669"/>
    <property type="project" value="InterPro"/>
</dbReference>
<dbReference type="GO" id="GO:0006865">
    <property type="term" value="P:amino acid transport"/>
    <property type="evidence" value="ECO:0007669"/>
    <property type="project" value="UniProtKB-KW"/>
</dbReference>
<dbReference type="CDD" id="cd00994">
    <property type="entry name" value="PBP2_GlnH"/>
    <property type="match status" value="1"/>
</dbReference>
<dbReference type="FunFam" id="3.40.190.10:FF:000063">
    <property type="entry name" value="Glutamine ABC transporter, periplasmic protein"/>
    <property type="match status" value="1"/>
</dbReference>
<dbReference type="Gene3D" id="3.40.190.10">
    <property type="entry name" value="Periplasmic binding protein-like II"/>
    <property type="match status" value="2"/>
</dbReference>
<dbReference type="InterPro" id="IPR001320">
    <property type="entry name" value="Iontro_rcpt_C"/>
</dbReference>
<dbReference type="InterPro" id="IPR044132">
    <property type="entry name" value="PBP2_GlnH"/>
</dbReference>
<dbReference type="InterPro" id="IPR018313">
    <property type="entry name" value="SBP_3_CS"/>
</dbReference>
<dbReference type="InterPro" id="IPR001638">
    <property type="entry name" value="Solute-binding_3/MltF_N"/>
</dbReference>
<dbReference type="NCBIfam" id="NF007029">
    <property type="entry name" value="PRK09495.1"/>
    <property type="match status" value="1"/>
</dbReference>
<dbReference type="PANTHER" id="PTHR35936:SF38">
    <property type="entry name" value="GLUTAMINE-BINDING PERIPLASMIC PROTEIN"/>
    <property type="match status" value="1"/>
</dbReference>
<dbReference type="PANTHER" id="PTHR35936">
    <property type="entry name" value="MEMBRANE-BOUND LYTIC MUREIN TRANSGLYCOSYLASE F"/>
    <property type="match status" value="1"/>
</dbReference>
<dbReference type="Pfam" id="PF00497">
    <property type="entry name" value="SBP_bac_3"/>
    <property type="match status" value="1"/>
</dbReference>
<dbReference type="SMART" id="SM00062">
    <property type="entry name" value="PBPb"/>
    <property type="match status" value="1"/>
</dbReference>
<dbReference type="SMART" id="SM00079">
    <property type="entry name" value="PBPe"/>
    <property type="match status" value="1"/>
</dbReference>
<dbReference type="SUPFAM" id="SSF53850">
    <property type="entry name" value="Periplasmic binding protein-like II"/>
    <property type="match status" value="1"/>
</dbReference>
<dbReference type="PROSITE" id="PS01039">
    <property type="entry name" value="SBP_BACTERIAL_3"/>
    <property type="match status" value="1"/>
</dbReference>
<protein>
    <recommendedName>
        <fullName>Glutamine-binding periplasmic protein</fullName>
        <shortName>GlnBP</shortName>
    </recommendedName>
</protein>
<name>GLNH_ECOL6</name>
<organism>
    <name type="scientific">Escherichia coli O6:H1 (strain CFT073 / ATCC 700928 / UPEC)</name>
    <dbReference type="NCBI Taxonomy" id="199310"/>
    <lineage>
        <taxon>Bacteria</taxon>
        <taxon>Pseudomonadati</taxon>
        <taxon>Pseudomonadota</taxon>
        <taxon>Gammaproteobacteria</taxon>
        <taxon>Enterobacterales</taxon>
        <taxon>Enterobacteriaceae</taxon>
        <taxon>Escherichia</taxon>
    </lineage>
</organism>
<accession>P0AEQ4</accession>
<accession>P10344</accession>
<sequence>MKSVLKVSLAALTLAFAVSSHAADKKLVVATDTAFVPFEFKQGDKYVGFDVDLWAAIAKELKLDYELKPMDFSGIIPALQTKNVDLALAGITITDERKKAIDFSDGYYKSGLLVMVKANNNDVKSVKDLDGKVVAVKSGTGSVDYAKANIKTKDLRQFPNIDNAYMELGTNRADAVLHDTPNILYFIKTAGNGQFKAVGDSLEAQQYGIAFPKGSDELRDKVNGALKTLRENGTYNEIYKKWFGTEPK</sequence>
<feature type="signal peptide" evidence="1">
    <location>
        <begin position="1"/>
        <end position="22"/>
    </location>
</feature>
<feature type="chain" id="PRO_0000045052" description="Glutamine-binding periplasmic protein">
    <location>
        <begin position="23"/>
        <end position="248"/>
    </location>
</feature>
<keyword id="KW-0029">Amino-acid transport</keyword>
<keyword id="KW-0574">Periplasm</keyword>
<keyword id="KW-1185">Reference proteome</keyword>
<keyword id="KW-0732">Signal</keyword>
<keyword id="KW-0813">Transport</keyword>